<reference key="1">
    <citation type="journal article" date="1994" name="Virology">
        <title>The complete DNA sequence and the genetic organization of the short unique region (US) of the bovine herpesvirus type 1 (ST strain).</title>
        <authorList>
            <person name="Leung-Tack P."/>
            <person name="Audonnet J.F."/>
            <person name="Riviere M."/>
        </authorList>
    </citation>
    <scope>NUCLEOTIDE SEQUENCE [GENOMIC DNA]</scope>
</reference>
<name>US03_BHV1S</name>
<comment type="function">
    <text evidence="1">Multifunctional serine/threonine kinase that plays a role in several processes including egress of virus particles from the nucleus, modulation of the actin cytoskeleton and inhibition of apoptosis. Phosphorylates UL31 and UL34 homologs, two critical regulators of capsid budding from nucleus to endoplasmic reticulum, thereby facilitating virion egress. Modulates and redistributes host components of the nuclear envelope, including LMNA, emerin/EMD and the nuclear matrix protein MATR3. Phosphorylates envelope glycoprotein B (gB), probably to direct it to the cell surface. Promotes virus intracellular spread by restructuring host cell cytoskeleton. Blocks host apoptosis to extend cell survival and allow efficient viral replication. Promotes viral gene expression by phosphorylating host HDAC2 to reduce viral genome silencing (By similarity).</text>
</comment>
<comment type="catalytic activity">
    <reaction>
        <text>L-seryl-[protein] + ATP = O-phospho-L-seryl-[protein] + ADP + H(+)</text>
        <dbReference type="Rhea" id="RHEA:17989"/>
        <dbReference type="Rhea" id="RHEA-COMP:9863"/>
        <dbReference type="Rhea" id="RHEA-COMP:11604"/>
        <dbReference type="ChEBI" id="CHEBI:15378"/>
        <dbReference type="ChEBI" id="CHEBI:29999"/>
        <dbReference type="ChEBI" id="CHEBI:30616"/>
        <dbReference type="ChEBI" id="CHEBI:83421"/>
        <dbReference type="ChEBI" id="CHEBI:456216"/>
        <dbReference type="EC" id="2.7.11.1"/>
    </reaction>
</comment>
<comment type="catalytic activity">
    <reaction>
        <text>L-threonyl-[protein] + ATP = O-phospho-L-threonyl-[protein] + ADP + H(+)</text>
        <dbReference type="Rhea" id="RHEA:46608"/>
        <dbReference type="Rhea" id="RHEA-COMP:11060"/>
        <dbReference type="Rhea" id="RHEA-COMP:11605"/>
        <dbReference type="ChEBI" id="CHEBI:15378"/>
        <dbReference type="ChEBI" id="CHEBI:30013"/>
        <dbReference type="ChEBI" id="CHEBI:30616"/>
        <dbReference type="ChEBI" id="CHEBI:61977"/>
        <dbReference type="ChEBI" id="CHEBI:456216"/>
        <dbReference type="EC" id="2.7.11.1"/>
    </reaction>
</comment>
<comment type="subcellular location">
    <subcellularLocation>
        <location evidence="1">Host cytoplasm</location>
    </subcellularLocation>
    <subcellularLocation>
        <location evidence="1">Host nucleus</location>
    </subcellularLocation>
</comment>
<comment type="PTM">
    <text evidence="1">Phosphorylated by UL13 homolog; this phosphorylation regulates subsequent phosphorylation of UL31 and UL34 homologs by US3. Autophosphorylated (By similarity).</text>
</comment>
<comment type="similarity">
    <text evidence="2">Belongs to the protein kinase superfamily. Ser/Thr protein kinase family.</text>
</comment>
<organismHost>
    <name type="scientific">Bos taurus</name>
    <name type="common">Bovine</name>
    <dbReference type="NCBI Taxonomy" id="9913"/>
</organismHost>
<accession>Q08097</accession>
<sequence length="467" mass="49886">MERAAERLARQRARGLWRSRFACCVAAEPSGSRLGQSVRGAAAAPARCAAEGSADLYLAVNNEGPEVAPPARTGPPDADGIEGGAAVAGNEQGGVAAGNERRAATGDEKESASGGENESESESESESESESGADDGDWDDDDDAGPAGGVTREEAEGAARALNFRIIRRLTPGSEGRVFEATGPAPAQEHVVLKIGASASTLAEAMLLRTLDHANVVKLKAVLFHGELVCAVLARYREDLHTHLWKIDRPMALPTALQVTRAVLQGLAYLHSRRIAHRDVKTENVFLNGPGDVCLGDFGAAHGPVTEPRYYGLAGTLETNSPELLARARYDCRTDVWSAGVVAYEMLAYPRALFDSPAGPQGEDAEASGPPTILGDRDCARQLLRVIRRLAVHAEEFPPSPTDRLTRNFKRHAATGREPHSPYRCLAVLRLPCDADRLLHQMLTFDFRARPTAAELLEHPVFGAASG</sequence>
<feature type="chain" id="PRO_0000086175" description="Serine/threonine-protein kinase US3 homolog">
    <location>
        <begin position="1"/>
        <end position="467"/>
    </location>
</feature>
<feature type="domain" description="Protein kinase" evidence="2">
    <location>
        <begin position="164"/>
        <end position="462"/>
    </location>
</feature>
<feature type="region of interest" description="Disordered" evidence="4">
    <location>
        <begin position="64"/>
        <end position="155"/>
    </location>
</feature>
<feature type="compositionally biased region" description="Basic and acidic residues" evidence="4">
    <location>
        <begin position="99"/>
        <end position="111"/>
    </location>
</feature>
<feature type="compositionally biased region" description="Acidic residues" evidence="4">
    <location>
        <begin position="117"/>
        <end position="144"/>
    </location>
</feature>
<feature type="active site" description="Proton acceptor" evidence="2 3">
    <location>
        <position position="279"/>
    </location>
</feature>
<feature type="binding site" evidence="2">
    <location>
        <begin position="170"/>
        <end position="178"/>
    </location>
    <ligand>
        <name>ATP</name>
        <dbReference type="ChEBI" id="CHEBI:30616"/>
    </ligand>
</feature>
<feature type="binding site" evidence="2">
    <location>
        <position position="194"/>
    </location>
    <ligand>
        <name>ATP</name>
        <dbReference type="ChEBI" id="CHEBI:30616"/>
    </ligand>
</feature>
<proteinExistence type="inferred from homology"/>
<evidence type="ECO:0000250" key="1"/>
<evidence type="ECO:0000255" key="2">
    <source>
        <dbReference type="PROSITE-ProRule" id="PRU00159"/>
    </source>
</evidence>
<evidence type="ECO:0000255" key="3">
    <source>
        <dbReference type="PROSITE-ProRule" id="PRU10027"/>
    </source>
</evidence>
<evidence type="ECO:0000256" key="4">
    <source>
        <dbReference type="SAM" id="MobiDB-lite"/>
    </source>
</evidence>
<dbReference type="EC" id="2.7.11.1"/>
<dbReference type="EMBL" id="Z23068">
    <property type="protein sequence ID" value="CAA80602.1"/>
    <property type="molecule type" value="Genomic_DNA"/>
</dbReference>
<dbReference type="PIR" id="S35782">
    <property type="entry name" value="S35782"/>
</dbReference>
<dbReference type="SMR" id="Q08097"/>
<dbReference type="GO" id="GO:0030430">
    <property type="term" value="C:host cell cytoplasm"/>
    <property type="evidence" value="ECO:0007669"/>
    <property type="project" value="UniProtKB-SubCell"/>
</dbReference>
<dbReference type="GO" id="GO:0042025">
    <property type="term" value="C:host cell nucleus"/>
    <property type="evidence" value="ECO:0007669"/>
    <property type="project" value="UniProtKB-SubCell"/>
</dbReference>
<dbReference type="GO" id="GO:0005524">
    <property type="term" value="F:ATP binding"/>
    <property type="evidence" value="ECO:0007669"/>
    <property type="project" value="UniProtKB-KW"/>
</dbReference>
<dbReference type="GO" id="GO:0106310">
    <property type="term" value="F:protein serine kinase activity"/>
    <property type="evidence" value="ECO:0007669"/>
    <property type="project" value="RHEA"/>
</dbReference>
<dbReference type="GO" id="GO:0004674">
    <property type="term" value="F:protein serine/threonine kinase activity"/>
    <property type="evidence" value="ECO:0007669"/>
    <property type="project" value="UniProtKB-KW"/>
</dbReference>
<dbReference type="GO" id="GO:0052150">
    <property type="term" value="P:symbiont-mediated perturbation of host apoptosis"/>
    <property type="evidence" value="ECO:0007669"/>
    <property type="project" value="UniProtKB-KW"/>
</dbReference>
<dbReference type="GO" id="GO:0039525">
    <property type="term" value="P:symbiont-mediated perturbation of host chromatin organization"/>
    <property type="evidence" value="ECO:0007669"/>
    <property type="project" value="UniProtKB-KW"/>
</dbReference>
<dbReference type="Gene3D" id="1.10.510.10">
    <property type="entry name" value="Transferase(Phosphotransferase) domain 1"/>
    <property type="match status" value="1"/>
</dbReference>
<dbReference type="InterPro" id="IPR011009">
    <property type="entry name" value="Kinase-like_dom_sf"/>
</dbReference>
<dbReference type="InterPro" id="IPR000719">
    <property type="entry name" value="Prot_kinase_dom"/>
</dbReference>
<dbReference type="InterPro" id="IPR008271">
    <property type="entry name" value="Ser/Thr_kinase_AS"/>
</dbReference>
<dbReference type="InterPro" id="IPR053235">
    <property type="entry name" value="Ser_Thr_kinase"/>
</dbReference>
<dbReference type="PANTHER" id="PTHR24361">
    <property type="entry name" value="MITOGEN-ACTIVATED KINASE KINASE KINASE"/>
    <property type="match status" value="1"/>
</dbReference>
<dbReference type="PANTHER" id="PTHR24361:SF613">
    <property type="entry name" value="NUCLEAR RECEPTOR-BINDING PROTEIN-RELATED"/>
    <property type="match status" value="1"/>
</dbReference>
<dbReference type="Pfam" id="PF00069">
    <property type="entry name" value="Pkinase"/>
    <property type="match status" value="1"/>
</dbReference>
<dbReference type="SMART" id="SM00220">
    <property type="entry name" value="S_TKc"/>
    <property type="match status" value="1"/>
</dbReference>
<dbReference type="SUPFAM" id="SSF56112">
    <property type="entry name" value="Protein kinase-like (PK-like)"/>
    <property type="match status" value="1"/>
</dbReference>
<dbReference type="PROSITE" id="PS50011">
    <property type="entry name" value="PROTEIN_KINASE_DOM"/>
    <property type="match status" value="1"/>
</dbReference>
<dbReference type="PROSITE" id="PS00108">
    <property type="entry name" value="PROTEIN_KINASE_ST"/>
    <property type="match status" value="1"/>
</dbReference>
<keyword id="KW-0067">ATP-binding</keyword>
<keyword id="KW-1035">Host cytoplasm</keyword>
<keyword id="KW-1048">Host nucleus</keyword>
<keyword id="KW-0945">Host-virus interaction</keyword>
<keyword id="KW-0418">Kinase</keyword>
<keyword id="KW-1119">Modulation of host cell apoptosis by virus</keyword>
<keyword id="KW-1122">Modulation of host chromatin by virus</keyword>
<keyword id="KW-0547">Nucleotide-binding</keyword>
<keyword id="KW-0723">Serine/threonine-protein kinase</keyword>
<keyword id="KW-0808">Transferase</keyword>
<protein>
    <recommendedName>
        <fullName>Serine/threonine-protein kinase US3 homolog</fullName>
        <ecNumber>2.7.11.1</ecNumber>
    </recommendedName>
</protein>
<organism>
    <name type="scientific">Bovine herpesvirus 1.2 (strain ST)</name>
    <name type="common">BoHV-1</name>
    <name type="synonym">Infectious bovine rhinotracheitis virus</name>
    <dbReference type="NCBI Taxonomy" id="45407"/>
    <lineage>
        <taxon>Viruses</taxon>
        <taxon>Duplodnaviria</taxon>
        <taxon>Heunggongvirae</taxon>
        <taxon>Peploviricota</taxon>
        <taxon>Herviviricetes</taxon>
        <taxon>Herpesvirales</taxon>
        <taxon>Orthoherpesviridae</taxon>
        <taxon>Alphaherpesvirinae</taxon>
        <taxon>Varicellovirus</taxon>
        <taxon>Varicellovirus bovinealpha1</taxon>
    </lineage>
</organism>